<name>RS16_THEYD</name>
<protein>
    <recommendedName>
        <fullName evidence="1">Small ribosomal subunit protein bS16</fullName>
    </recommendedName>
    <alternativeName>
        <fullName evidence="2">30S ribosomal protein S16</fullName>
    </alternativeName>
</protein>
<dbReference type="EMBL" id="CP001147">
    <property type="protein sequence ID" value="ACI20405.1"/>
    <property type="molecule type" value="Genomic_DNA"/>
</dbReference>
<dbReference type="RefSeq" id="WP_012545141.1">
    <property type="nucleotide sequence ID" value="NC_011296.1"/>
</dbReference>
<dbReference type="RefSeq" id="YP_002248659.1">
    <property type="nucleotide sequence ID" value="NC_011296.1"/>
</dbReference>
<dbReference type="SMR" id="B5YK94"/>
<dbReference type="FunCoup" id="B5YK94">
    <property type="interactions" value="459"/>
</dbReference>
<dbReference type="STRING" id="289376.THEYE_A0818"/>
<dbReference type="EnsemblBacteria" id="ACI20405">
    <property type="protein sequence ID" value="ACI20405"/>
    <property type="gene ID" value="THEYE_A0818"/>
</dbReference>
<dbReference type="KEGG" id="tye:THEYE_A0818"/>
<dbReference type="PATRIC" id="fig|289376.4.peg.808"/>
<dbReference type="eggNOG" id="COG0228">
    <property type="taxonomic scope" value="Bacteria"/>
</dbReference>
<dbReference type="HOGENOM" id="CLU_100590_5_0_0"/>
<dbReference type="InParanoid" id="B5YK94"/>
<dbReference type="OrthoDB" id="9807878at2"/>
<dbReference type="Proteomes" id="UP000000718">
    <property type="component" value="Chromosome"/>
</dbReference>
<dbReference type="GO" id="GO:0005737">
    <property type="term" value="C:cytoplasm"/>
    <property type="evidence" value="ECO:0007669"/>
    <property type="project" value="UniProtKB-ARBA"/>
</dbReference>
<dbReference type="GO" id="GO:0015935">
    <property type="term" value="C:small ribosomal subunit"/>
    <property type="evidence" value="ECO:0000318"/>
    <property type="project" value="GO_Central"/>
</dbReference>
<dbReference type="GO" id="GO:0003735">
    <property type="term" value="F:structural constituent of ribosome"/>
    <property type="evidence" value="ECO:0000318"/>
    <property type="project" value="GO_Central"/>
</dbReference>
<dbReference type="GO" id="GO:0006412">
    <property type="term" value="P:translation"/>
    <property type="evidence" value="ECO:0007669"/>
    <property type="project" value="UniProtKB-UniRule"/>
</dbReference>
<dbReference type="FunFam" id="3.30.1320.10:FF:000005">
    <property type="entry name" value="30S ribosomal protein S16"/>
    <property type="match status" value="1"/>
</dbReference>
<dbReference type="Gene3D" id="3.30.1320.10">
    <property type="match status" value="1"/>
</dbReference>
<dbReference type="HAMAP" id="MF_00385">
    <property type="entry name" value="Ribosomal_bS16"/>
    <property type="match status" value="1"/>
</dbReference>
<dbReference type="InterPro" id="IPR000307">
    <property type="entry name" value="Ribosomal_bS16"/>
</dbReference>
<dbReference type="InterPro" id="IPR023803">
    <property type="entry name" value="Ribosomal_bS16_dom_sf"/>
</dbReference>
<dbReference type="NCBIfam" id="TIGR00002">
    <property type="entry name" value="S16"/>
    <property type="match status" value="1"/>
</dbReference>
<dbReference type="PANTHER" id="PTHR12919">
    <property type="entry name" value="30S RIBOSOMAL PROTEIN S16"/>
    <property type="match status" value="1"/>
</dbReference>
<dbReference type="PANTHER" id="PTHR12919:SF20">
    <property type="entry name" value="SMALL RIBOSOMAL SUBUNIT PROTEIN BS16M"/>
    <property type="match status" value="1"/>
</dbReference>
<dbReference type="Pfam" id="PF00886">
    <property type="entry name" value="Ribosomal_S16"/>
    <property type="match status" value="1"/>
</dbReference>
<dbReference type="SUPFAM" id="SSF54565">
    <property type="entry name" value="Ribosomal protein S16"/>
    <property type="match status" value="1"/>
</dbReference>
<gene>
    <name evidence="1" type="primary">rpsP</name>
    <name type="ordered locus">THEYE_A0818</name>
</gene>
<organism>
    <name type="scientific">Thermodesulfovibrio yellowstonii (strain ATCC 51303 / DSM 11347 / YP87)</name>
    <dbReference type="NCBI Taxonomy" id="289376"/>
    <lineage>
        <taxon>Bacteria</taxon>
        <taxon>Pseudomonadati</taxon>
        <taxon>Nitrospirota</taxon>
        <taxon>Thermodesulfovibrionia</taxon>
        <taxon>Thermodesulfovibrionales</taxon>
        <taxon>Thermodesulfovibrionaceae</taxon>
        <taxon>Thermodesulfovibrio</taxon>
    </lineage>
</organism>
<reference key="1">
    <citation type="submission" date="2008-08" db="EMBL/GenBank/DDBJ databases">
        <title>The complete genome sequence of Thermodesulfovibrio yellowstonii strain ATCC 51303 / DSM 11347 / YP87.</title>
        <authorList>
            <person name="Dodson R.J."/>
            <person name="Durkin A.S."/>
            <person name="Wu M."/>
            <person name="Eisen J."/>
            <person name="Sutton G."/>
        </authorList>
    </citation>
    <scope>NUCLEOTIDE SEQUENCE [LARGE SCALE GENOMIC DNA]</scope>
    <source>
        <strain>ATCC 51303 / DSM 11347 / YP87</strain>
    </source>
</reference>
<sequence length="78" mass="8972">MVRIRLMRLGAKKKPFYRVVVADAKARRNGPFIEIIGTYNPKTDPPEVNLNMERVNYWIDKGAQPSDTVKKLIERVSA</sequence>
<keyword id="KW-1185">Reference proteome</keyword>
<keyword id="KW-0687">Ribonucleoprotein</keyword>
<keyword id="KW-0689">Ribosomal protein</keyword>
<proteinExistence type="inferred from homology"/>
<feature type="chain" id="PRO_1000122592" description="Small ribosomal subunit protein bS16">
    <location>
        <begin position="1"/>
        <end position="78"/>
    </location>
</feature>
<comment type="similarity">
    <text evidence="1">Belongs to the bacterial ribosomal protein bS16 family.</text>
</comment>
<evidence type="ECO:0000255" key="1">
    <source>
        <dbReference type="HAMAP-Rule" id="MF_00385"/>
    </source>
</evidence>
<evidence type="ECO:0000305" key="2"/>
<accession>B5YK94</accession>